<gene>
    <name evidence="1" type="primary">atpD</name>
    <name type="ordered locus">MMAR_4087</name>
</gene>
<organism>
    <name type="scientific">Mycobacterium marinum (strain ATCC BAA-535 / M)</name>
    <dbReference type="NCBI Taxonomy" id="216594"/>
    <lineage>
        <taxon>Bacteria</taxon>
        <taxon>Bacillati</taxon>
        <taxon>Actinomycetota</taxon>
        <taxon>Actinomycetes</taxon>
        <taxon>Mycobacteriales</taxon>
        <taxon>Mycobacteriaceae</taxon>
        <taxon>Mycobacterium</taxon>
        <taxon>Mycobacterium ulcerans group</taxon>
    </lineage>
</organism>
<comment type="function">
    <text evidence="1">Produces ATP from ADP in the presence of a proton gradient across the membrane. The catalytic sites are hosted primarily by the beta subunits.</text>
</comment>
<comment type="catalytic activity">
    <reaction evidence="1">
        <text>ATP + H2O + 4 H(+)(in) = ADP + phosphate + 5 H(+)(out)</text>
        <dbReference type="Rhea" id="RHEA:57720"/>
        <dbReference type="ChEBI" id="CHEBI:15377"/>
        <dbReference type="ChEBI" id="CHEBI:15378"/>
        <dbReference type="ChEBI" id="CHEBI:30616"/>
        <dbReference type="ChEBI" id="CHEBI:43474"/>
        <dbReference type="ChEBI" id="CHEBI:456216"/>
        <dbReference type="EC" id="7.1.2.2"/>
    </reaction>
</comment>
<comment type="subunit">
    <text evidence="1">F-type ATPases have 2 components, CF(1) - the catalytic core - and CF(0) - the membrane proton channel. CF(1) has five subunits: alpha(3), beta(3), gamma(1), delta(1), epsilon(1). CF(0) has three main subunits: a(1), b(2) and c(9-12). The alpha and beta chains form an alternating ring which encloses part of the gamma chain. CF(1) is attached to CF(0) by a central stalk formed by the gamma and epsilon chains, while a peripheral stalk is formed by the delta and b chains.</text>
</comment>
<comment type="subcellular location">
    <subcellularLocation>
        <location evidence="1">Cell membrane</location>
        <topology evidence="1">Peripheral membrane protein</topology>
    </subcellularLocation>
</comment>
<comment type="similarity">
    <text evidence="1">Belongs to the ATPase alpha/beta chains family.</text>
</comment>
<name>ATPB_MYCMM</name>
<protein>
    <recommendedName>
        <fullName evidence="1">ATP synthase subunit beta</fullName>
        <ecNumber evidence="1">7.1.2.2</ecNumber>
    </recommendedName>
    <alternativeName>
        <fullName evidence="1">ATP synthase F1 sector subunit beta</fullName>
    </alternativeName>
    <alternativeName>
        <fullName evidence="1">F-ATPase subunit beta</fullName>
    </alternativeName>
</protein>
<keyword id="KW-0066">ATP synthesis</keyword>
<keyword id="KW-0067">ATP-binding</keyword>
<keyword id="KW-1003">Cell membrane</keyword>
<keyword id="KW-0139">CF(1)</keyword>
<keyword id="KW-0375">Hydrogen ion transport</keyword>
<keyword id="KW-0406">Ion transport</keyword>
<keyword id="KW-0472">Membrane</keyword>
<keyword id="KW-0547">Nucleotide-binding</keyword>
<keyword id="KW-1185">Reference proteome</keyword>
<keyword id="KW-1278">Translocase</keyword>
<keyword id="KW-0813">Transport</keyword>
<feature type="chain" id="PRO_1000143524" description="ATP synthase subunit beta">
    <location>
        <begin position="1"/>
        <end position="483"/>
    </location>
</feature>
<feature type="binding site" evidence="1">
    <location>
        <begin position="168"/>
        <end position="175"/>
    </location>
    <ligand>
        <name>ATP</name>
        <dbReference type="ChEBI" id="CHEBI:30616"/>
    </ligand>
</feature>
<evidence type="ECO:0000255" key="1">
    <source>
        <dbReference type="HAMAP-Rule" id="MF_01347"/>
    </source>
</evidence>
<dbReference type="EC" id="7.1.2.2" evidence="1"/>
<dbReference type="EMBL" id="CP000854">
    <property type="protein sequence ID" value="ACC42494.1"/>
    <property type="molecule type" value="Genomic_DNA"/>
</dbReference>
<dbReference type="RefSeq" id="WP_011741624.1">
    <property type="nucleotide sequence ID" value="NC_010612.1"/>
</dbReference>
<dbReference type="SMR" id="B2HQK2"/>
<dbReference type="STRING" id="216594.MMAR_4087"/>
<dbReference type="GeneID" id="34341448"/>
<dbReference type="KEGG" id="mmi:MMAR_4087"/>
<dbReference type="eggNOG" id="COG0055">
    <property type="taxonomic scope" value="Bacteria"/>
</dbReference>
<dbReference type="HOGENOM" id="CLU_022398_0_2_11"/>
<dbReference type="OrthoDB" id="9801639at2"/>
<dbReference type="Proteomes" id="UP000001190">
    <property type="component" value="Chromosome"/>
</dbReference>
<dbReference type="GO" id="GO:0005886">
    <property type="term" value="C:plasma membrane"/>
    <property type="evidence" value="ECO:0007669"/>
    <property type="project" value="UniProtKB-SubCell"/>
</dbReference>
<dbReference type="GO" id="GO:0045259">
    <property type="term" value="C:proton-transporting ATP synthase complex"/>
    <property type="evidence" value="ECO:0007669"/>
    <property type="project" value="UniProtKB-KW"/>
</dbReference>
<dbReference type="GO" id="GO:0005524">
    <property type="term" value="F:ATP binding"/>
    <property type="evidence" value="ECO:0007669"/>
    <property type="project" value="UniProtKB-UniRule"/>
</dbReference>
<dbReference type="GO" id="GO:0016887">
    <property type="term" value="F:ATP hydrolysis activity"/>
    <property type="evidence" value="ECO:0007669"/>
    <property type="project" value="InterPro"/>
</dbReference>
<dbReference type="GO" id="GO:0046933">
    <property type="term" value="F:proton-transporting ATP synthase activity, rotational mechanism"/>
    <property type="evidence" value="ECO:0007669"/>
    <property type="project" value="UniProtKB-UniRule"/>
</dbReference>
<dbReference type="CDD" id="cd18110">
    <property type="entry name" value="ATP-synt_F1_beta_C"/>
    <property type="match status" value="1"/>
</dbReference>
<dbReference type="CDD" id="cd18115">
    <property type="entry name" value="ATP-synt_F1_beta_N"/>
    <property type="match status" value="1"/>
</dbReference>
<dbReference type="CDD" id="cd01133">
    <property type="entry name" value="F1-ATPase_beta_CD"/>
    <property type="match status" value="1"/>
</dbReference>
<dbReference type="FunFam" id="1.10.1140.10:FF:000001">
    <property type="entry name" value="ATP synthase subunit beta"/>
    <property type="match status" value="1"/>
</dbReference>
<dbReference type="FunFam" id="2.40.10.170:FF:000005">
    <property type="entry name" value="ATP synthase subunit beta"/>
    <property type="match status" value="1"/>
</dbReference>
<dbReference type="FunFam" id="3.40.50.300:FF:000004">
    <property type="entry name" value="ATP synthase subunit beta"/>
    <property type="match status" value="1"/>
</dbReference>
<dbReference type="Gene3D" id="2.40.10.170">
    <property type="match status" value="1"/>
</dbReference>
<dbReference type="Gene3D" id="1.10.1140.10">
    <property type="entry name" value="Bovine Mitochondrial F1-atpase, Atp Synthase Beta Chain, Chain D, domain 3"/>
    <property type="match status" value="1"/>
</dbReference>
<dbReference type="Gene3D" id="3.40.50.300">
    <property type="entry name" value="P-loop containing nucleotide triphosphate hydrolases"/>
    <property type="match status" value="1"/>
</dbReference>
<dbReference type="HAMAP" id="MF_01347">
    <property type="entry name" value="ATP_synth_beta_bact"/>
    <property type="match status" value="1"/>
</dbReference>
<dbReference type="InterPro" id="IPR003593">
    <property type="entry name" value="AAA+_ATPase"/>
</dbReference>
<dbReference type="InterPro" id="IPR055190">
    <property type="entry name" value="ATP-synt_VA_C"/>
</dbReference>
<dbReference type="InterPro" id="IPR005722">
    <property type="entry name" value="ATP_synth_F1_bsu"/>
</dbReference>
<dbReference type="InterPro" id="IPR020003">
    <property type="entry name" value="ATPase_a/bsu_AS"/>
</dbReference>
<dbReference type="InterPro" id="IPR050053">
    <property type="entry name" value="ATPase_alpha/beta_chains"/>
</dbReference>
<dbReference type="InterPro" id="IPR004100">
    <property type="entry name" value="ATPase_F1/V1/A1_a/bsu_N"/>
</dbReference>
<dbReference type="InterPro" id="IPR036121">
    <property type="entry name" value="ATPase_F1/V1/A1_a/bsu_N_sf"/>
</dbReference>
<dbReference type="InterPro" id="IPR000194">
    <property type="entry name" value="ATPase_F1/V1/A1_a/bsu_nucl-bd"/>
</dbReference>
<dbReference type="InterPro" id="IPR024034">
    <property type="entry name" value="ATPase_F1/V1_b/a_C"/>
</dbReference>
<dbReference type="InterPro" id="IPR027417">
    <property type="entry name" value="P-loop_NTPase"/>
</dbReference>
<dbReference type="NCBIfam" id="TIGR01039">
    <property type="entry name" value="atpD"/>
    <property type="match status" value="1"/>
</dbReference>
<dbReference type="PANTHER" id="PTHR15184">
    <property type="entry name" value="ATP SYNTHASE"/>
    <property type="match status" value="1"/>
</dbReference>
<dbReference type="PANTHER" id="PTHR15184:SF71">
    <property type="entry name" value="ATP SYNTHASE SUBUNIT BETA, MITOCHONDRIAL"/>
    <property type="match status" value="1"/>
</dbReference>
<dbReference type="Pfam" id="PF00006">
    <property type="entry name" value="ATP-synt_ab"/>
    <property type="match status" value="1"/>
</dbReference>
<dbReference type="Pfam" id="PF02874">
    <property type="entry name" value="ATP-synt_ab_N"/>
    <property type="match status" value="1"/>
</dbReference>
<dbReference type="Pfam" id="PF22919">
    <property type="entry name" value="ATP-synt_VA_C"/>
    <property type="match status" value="1"/>
</dbReference>
<dbReference type="SMART" id="SM00382">
    <property type="entry name" value="AAA"/>
    <property type="match status" value="1"/>
</dbReference>
<dbReference type="SUPFAM" id="SSF47917">
    <property type="entry name" value="C-terminal domain of alpha and beta subunits of F1 ATP synthase"/>
    <property type="match status" value="1"/>
</dbReference>
<dbReference type="SUPFAM" id="SSF50615">
    <property type="entry name" value="N-terminal domain of alpha and beta subunits of F1 ATP synthase"/>
    <property type="match status" value="1"/>
</dbReference>
<dbReference type="SUPFAM" id="SSF52540">
    <property type="entry name" value="P-loop containing nucleoside triphosphate hydrolases"/>
    <property type="match status" value="1"/>
</dbReference>
<dbReference type="PROSITE" id="PS00152">
    <property type="entry name" value="ATPASE_ALPHA_BETA"/>
    <property type="match status" value="1"/>
</dbReference>
<reference key="1">
    <citation type="journal article" date="2008" name="Genome Res.">
        <title>Insights from the complete genome sequence of Mycobacterium marinum on the evolution of Mycobacterium tuberculosis.</title>
        <authorList>
            <person name="Stinear T.P."/>
            <person name="Seemann T."/>
            <person name="Harrison P.F."/>
            <person name="Jenkin G.A."/>
            <person name="Davies J.K."/>
            <person name="Johnson P.D."/>
            <person name="Abdellah Z."/>
            <person name="Arrowsmith C."/>
            <person name="Chillingworth T."/>
            <person name="Churcher C."/>
            <person name="Clarke K."/>
            <person name="Cronin A."/>
            <person name="Davis P."/>
            <person name="Goodhead I."/>
            <person name="Holroyd N."/>
            <person name="Jagels K."/>
            <person name="Lord A."/>
            <person name="Moule S."/>
            <person name="Mungall K."/>
            <person name="Norbertczak H."/>
            <person name="Quail M.A."/>
            <person name="Rabbinowitsch E."/>
            <person name="Walker D."/>
            <person name="White B."/>
            <person name="Whitehead S."/>
            <person name="Small P.L."/>
            <person name="Brosch R."/>
            <person name="Ramakrishnan L."/>
            <person name="Fischbach M.A."/>
            <person name="Parkhill J."/>
            <person name="Cole S.T."/>
        </authorList>
    </citation>
    <scope>NUCLEOTIDE SEQUENCE [LARGE SCALE GENOMIC DNA]</scope>
    <source>
        <strain>ATCC BAA-535 / M</strain>
    </source>
</reference>
<accession>B2HQK2</accession>
<proteinExistence type="inferred from homology"/>
<sequence>MTVTAEKTDKSASSETSGRVVRVTGPVVDVEFPRGSVPELFNALHAKIDFGSLAKTLTLEVAQHLGDSLVRTISLQPTDGLVRGTEVTDTGRPISVPVGESVKGHVFNALGDCLDEPGYGEDFEHWSIHRKPPAFEDLEPRTEMLETGLKVVDLLTPYVRGGKIALFGGAGVGKTVLIQEMINRIARNFGGTSVFAGVGERTREGNDLWVELQEANVLKDTALVFGQMDEPPGTRMRVALSALTMAEWFRDEAGQDVLLFIDNIFRFTQAGSEVSTLLGRMPSAVGYQPTLADEMGELQERITSTRGRSITSMQAVYVPADDYTDPAPATTFAHLDATTELSRAVFSKGIFPAVDPLASSSTILDPGVVGDEHYRVAQEVIRILQRYKDLQDIIAILGIDELSEEDKQLVNRARRIERFLSQNMMAAEQFTGQPGSTVPVKETIEAFDRLCKGEFDHVPEQAFFLIGGLDDLAKKAESLGAKL</sequence>